<proteinExistence type="inferred from homology"/>
<reference key="1">
    <citation type="journal article" date="2007" name="Proc. Natl. Acad. Sci. U.S.A.">
        <title>Genome and proteome of long-chain alkane degrading Geobacillus thermodenitrificans NG80-2 isolated from a deep-subsurface oil reservoir.</title>
        <authorList>
            <person name="Feng L."/>
            <person name="Wang W."/>
            <person name="Cheng J."/>
            <person name="Ren Y."/>
            <person name="Zhao G."/>
            <person name="Gao C."/>
            <person name="Tang Y."/>
            <person name="Liu X."/>
            <person name="Han W."/>
            <person name="Peng X."/>
            <person name="Liu R."/>
            <person name="Wang L."/>
        </authorList>
    </citation>
    <scope>NUCLEOTIDE SEQUENCE [LARGE SCALE GENOMIC DNA]</scope>
    <source>
        <strain>NG80-2</strain>
    </source>
</reference>
<protein>
    <recommendedName>
        <fullName evidence="1">Cobyric acid synthase</fullName>
    </recommendedName>
</protein>
<keyword id="KW-0169">Cobalamin biosynthesis</keyword>
<keyword id="KW-0315">Glutamine amidotransferase</keyword>
<gene>
    <name evidence="1" type="primary">cobQ</name>
    <name type="ordered locus">GTNG_1684</name>
</gene>
<sequence length="500" mass="54925">MAKTLPIMFQGTHSDAGKSVIATAFCRMFAQDGWKTAPFKSQNMSLNSYVTPDGNEIGRAQGIQAEAAGVAARAEMNPILIKPSREHESQIVVLGKPYGNMQAFAYRNEFFHQGLAVIRQSLETLMNEYDRIVIEGAGSPAEVNLNDRELVNMRVARLANAPVVLIGDIERGGVFASLVGTLALLEPEDRKRVVGVIINKFRGDAALLKPGLDWFEQYTGVPVLGVVPHLPDLAIDAEDSLALERFAASSDDKGAIDIAVIRCPKIANFTDIDPLLTEPDCRVRLVTHAGELGEPDVIVLPGSKNTIEDLMYMKKRGLASRIVSLVNEGKTTVVGLCGGYQMLGDVIRDPHGVETPFPEVKGLGLLPVATTLERTKTTVRSEGMLTWAGERFSVRGYEIHMGRSTPLPGYVPLIEIGGRGEGAKREDGRVLGTYMHDLFHNDAFRTAFFNVIRREKGLASSAVRPFHSLKEAAFDRLAAHVRQHVAVERIEQMMRQFQQR</sequence>
<comment type="function">
    <text evidence="1">Catalyzes amidations at positions B, D, E, and G on adenosylcobyrinic A,C-diamide. NH(2) groups are provided by glutamine, and one molecule of ATP is hydrogenolyzed for each amidation.</text>
</comment>
<comment type="pathway">
    <text evidence="1">Cofactor biosynthesis; adenosylcobalamin biosynthesis.</text>
</comment>
<comment type="similarity">
    <text evidence="1">Belongs to the CobB/CobQ family. CobQ subfamily.</text>
</comment>
<accession>A4INZ4</accession>
<feature type="chain" id="PRO_1000002358" description="Cobyric acid synthase">
    <location>
        <begin position="1"/>
        <end position="500"/>
    </location>
</feature>
<feature type="domain" description="GATase cobBQ-type" evidence="1">
    <location>
        <begin position="255"/>
        <end position="444"/>
    </location>
</feature>
<feature type="active site" description="Nucleophile" evidence="1">
    <location>
        <position position="337"/>
    </location>
</feature>
<feature type="active site" evidence="1">
    <location>
        <position position="436"/>
    </location>
</feature>
<name>COBQ_GEOTN</name>
<evidence type="ECO:0000255" key="1">
    <source>
        <dbReference type="HAMAP-Rule" id="MF_00028"/>
    </source>
</evidence>
<organism>
    <name type="scientific">Geobacillus thermodenitrificans (strain NG80-2)</name>
    <dbReference type="NCBI Taxonomy" id="420246"/>
    <lineage>
        <taxon>Bacteria</taxon>
        <taxon>Bacillati</taxon>
        <taxon>Bacillota</taxon>
        <taxon>Bacilli</taxon>
        <taxon>Bacillales</taxon>
        <taxon>Anoxybacillaceae</taxon>
        <taxon>Geobacillus</taxon>
    </lineage>
</organism>
<dbReference type="EMBL" id="CP000557">
    <property type="protein sequence ID" value="ABO67048.1"/>
    <property type="molecule type" value="Genomic_DNA"/>
</dbReference>
<dbReference type="RefSeq" id="WP_011887470.1">
    <property type="nucleotide sequence ID" value="NC_009328.1"/>
</dbReference>
<dbReference type="SMR" id="A4INZ4"/>
<dbReference type="KEGG" id="gtn:GTNG_1684"/>
<dbReference type="eggNOG" id="COG1492">
    <property type="taxonomic scope" value="Bacteria"/>
</dbReference>
<dbReference type="HOGENOM" id="CLU_019250_2_2_9"/>
<dbReference type="UniPathway" id="UPA00148"/>
<dbReference type="Proteomes" id="UP000001578">
    <property type="component" value="Chromosome"/>
</dbReference>
<dbReference type="GO" id="GO:0015420">
    <property type="term" value="F:ABC-type vitamin B12 transporter activity"/>
    <property type="evidence" value="ECO:0007669"/>
    <property type="project" value="UniProtKB-UniRule"/>
</dbReference>
<dbReference type="GO" id="GO:0003824">
    <property type="term" value="F:catalytic activity"/>
    <property type="evidence" value="ECO:0007669"/>
    <property type="project" value="InterPro"/>
</dbReference>
<dbReference type="GO" id="GO:0009236">
    <property type="term" value="P:cobalamin biosynthetic process"/>
    <property type="evidence" value="ECO:0007669"/>
    <property type="project" value="UniProtKB-UniRule"/>
</dbReference>
<dbReference type="CDD" id="cd05389">
    <property type="entry name" value="CobQ_N"/>
    <property type="match status" value="1"/>
</dbReference>
<dbReference type="CDD" id="cd01750">
    <property type="entry name" value="GATase1_CobQ"/>
    <property type="match status" value="1"/>
</dbReference>
<dbReference type="Gene3D" id="3.40.50.880">
    <property type="match status" value="1"/>
</dbReference>
<dbReference type="Gene3D" id="3.40.50.300">
    <property type="entry name" value="P-loop containing nucleotide triphosphate hydrolases"/>
    <property type="match status" value="1"/>
</dbReference>
<dbReference type="HAMAP" id="MF_00028">
    <property type="entry name" value="CobQ"/>
    <property type="match status" value="1"/>
</dbReference>
<dbReference type="InterPro" id="IPR029062">
    <property type="entry name" value="Class_I_gatase-like"/>
</dbReference>
<dbReference type="InterPro" id="IPR002586">
    <property type="entry name" value="CobQ/CobB/MinD/ParA_Nub-bd_dom"/>
</dbReference>
<dbReference type="InterPro" id="IPR033949">
    <property type="entry name" value="CobQ_GATase1"/>
</dbReference>
<dbReference type="InterPro" id="IPR047045">
    <property type="entry name" value="CobQ_N"/>
</dbReference>
<dbReference type="InterPro" id="IPR004459">
    <property type="entry name" value="CobQ_synth"/>
</dbReference>
<dbReference type="InterPro" id="IPR011698">
    <property type="entry name" value="GATase_3"/>
</dbReference>
<dbReference type="InterPro" id="IPR027417">
    <property type="entry name" value="P-loop_NTPase"/>
</dbReference>
<dbReference type="NCBIfam" id="TIGR00313">
    <property type="entry name" value="cobQ"/>
    <property type="match status" value="1"/>
</dbReference>
<dbReference type="NCBIfam" id="NF001989">
    <property type="entry name" value="PRK00784.1"/>
    <property type="match status" value="1"/>
</dbReference>
<dbReference type="PANTHER" id="PTHR21343:SF1">
    <property type="entry name" value="COBYRIC ACID SYNTHASE"/>
    <property type="match status" value="1"/>
</dbReference>
<dbReference type="PANTHER" id="PTHR21343">
    <property type="entry name" value="DETHIOBIOTIN SYNTHETASE"/>
    <property type="match status" value="1"/>
</dbReference>
<dbReference type="Pfam" id="PF01656">
    <property type="entry name" value="CbiA"/>
    <property type="match status" value="1"/>
</dbReference>
<dbReference type="Pfam" id="PF07685">
    <property type="entry name" value="GATase_3"/>
    <property type="match status" value="1"/>
</dbReference>
<dbReference type="SUPFAM" id="SSF52317">
    <property type="entry name" value="Class I glutamine amidotransferase-like"/>
    <property type="match status" value="1"/>
</dbReference>
<dbReference type="SUPFAM" id="SSF52540">
    <property type="entry name" value="P-loop containing nucleoside triphosphate hydrolases"/>
    <property type="match status" value="1"/>
</dbReference>
<dbReference type="PROSITE" id="PS51274">
    <property type="entry name" value="GATASE_COBBQ"/>
    <property type="match status" value="1"/>
</dbReference>